<reference key="1">
    <citation type="submission" date="2006-10" db="EMBL/GenBank/DDBJ databases">
        <title>Complete sequence of chromosome of Pelobacter propionicus DSM 2379.</title>
        <authorList>
            <consortium name="US DOE Joint Genome Institute"/>
            <person name="Copeland A."/>
            <person name="Lucas S."/>
            <person name="Lapidus A."/>
            <person name="Barry K."/>
            <person name="Detter J.C."/>
            <person name="Glavina del Rio T."/>
            <person name="Hammon N."/>
            <person name="Israni S."/>
            <person name="Dalin E."/>
            <person name="Tice H."/>
            <person name="Pitluck S."/>
            <person name="Saunders E."/>
            <person name="Brettin T."/>
            <person name="Bruce D."/>
            <person name="Han C."/>
            <person name="Tapia R."/>
            <person name="Schmutz J."/>
            <person name="Larimer F."/>
            <person name="Land M."/>
            <person name="Hauser L."/>
            <person name="Kyrpides N."/>
            <person name="Kim E."/>
            <person name="Lovley D."/>
            <person name="Richardson P."/>
        </authorList>
    </citation>
    <scope>NUCLEOTIDE SEQUENCE [LARGE SCALE GENOMIC DNA]</scope>
    <source>
        <strain>DSM 2379 / NBRC 103807 / OttBd1</strain>
    </source>
</reference>
<protein>
    <recommendedName>
        <fullName evidence="1">Phosphoenolpyruvate carboxykinase (ATP)</fullName>
        <shortName evidence="1">PCK</shortName>
        <shortName evidence="1">PEP carboxykinase</shortName>
        <shortName evidence="1">PEPCK</shortName>
        <ecNumber evidence="1">4.1.1.49</ecNumber>
    </recommendedName>
</protein>
<accession>A1AV24</accession>
<proteinExistence type="inferred from homology"/>
<comment type="function">
    <text evidence="1">Involved in the gluconeogenesis. Catalyzes the conversion of oxaloacetate (OAA) to phosphoenolpyruvate (PEP) through direct phosphoryl transfer between the nucleoside triphosphate and OAA.</text>
</comment>
<comment type="catalytic activity">
    <reaction evidence="1">
        <text>oxaloacetate + ATP = phosphoenolpyruvate + ADP + CO2</text>
        <dbReference type="Rhea" id="RHEA:18617"/>
        <dbReference type="ChEBI" id="CHEBI:16452"/>
        <dbReference type="ChEBI" id="CHEBI:16526"/>
        <dbReference type="ChEBI" id="CHEBI:30616"/>
        <dbReference type="ChEBI" id="CHEBI:58702"/>
        <dbReference type="ChEBI" id="CHEBI:456216"/>
        <dbReference type="EC" id="4.1.1.49"/>
    </reaction>
</comment>
<comment type="cofactor">
    <cofactor evidence="1">
        <name>Mn(2+)</name>
        <dbReference type="ChEBI" id="CHEBI:29035"/>
    </cofactor>
    <text evidence="1">Binds 1 Mn(2+) ion per subunit.</text>
</comment>
<comment type="pathway">
    <text evidence="1">Carbohydrate biosynthesis; gluconeogenesis.</text>
</comment>
<comment type="subcellular location">
    <subcellularLocation>
        <location evidence="1">Cytoplasm</location>
    </subcellularLocation>
</comment>
<comment type="similarity">
    <text evidence="1">Belongs to the phosphoenolpyruvate carboxykinase (ATP) family.</text>
</comment>
<dbReference type="EC" id="4.1.1.49" evidence="1"/>
<dbReference type="EMBL" id="CP000482">
    <property type="protein sequence ID" value="ABL01195.1"/>
    <property type="molecule type" value="Genomic_DNA"/>
</dbReference>
<dbReference type="RefSeq" id="WP_011737407.1">
    <property type="nucleotide sequence ID" value="NC_008609.1"/>
</dbReference>
<dbReference type="SMR" id="A1AV24"/>
<dbReference type="STRING" id="338966.Ppro_3603"/>
<dbReference type="KEGG" id="ppd:Ppro_3603"/>
<dbReference type="eggNOG" id="COG1866">
    <property type="taxonomic scope" value="Bacteria"/>
</dbReference>
<dbReference type="HOGENOM" id="CLU_018247_0_1_7"/>
<dbReference type="OrthoDB" id="9806325at2"/>
<dbReference type="UniPathway" id="UPA00138"/>
<dbReference type="Proteomes" id="UP000006732">
    <property type="component" value="Chromosome"/>
</dbReference>
<dbReference type="GO" id="GO:0005829">
    <property type="term" value="C:cytosol"/>
    <property type="evidence" value="ECO:0007669"/>
    <property type="project" value="TreeGrafter"/>
</dbReference>
<dbReference type="GO" id="GO:0005524">
    <property type="term" value="F:ATP binding"/>
    <property type="evidence" value="ECO:0007669"/>
    <property type="project" value="UniProtKB-UniRule"/>
</dbReference>
<dbReference type="GO" id="GO:0046872">
    <property type="term" value="F:metal ion binding"/>
    <property type="evidence" value="ECO:0007669"/>
    <property type="project" value="UniProtKB-KW"/>
</dbReference>
<dbReference type="GO" id="GO:0004612">
    <property type="term" value="F:phosphoenolpyruvate carboxykinase (ATP) activity"/>
    <property type="evidence" value="ECO:0007669"/>
    <property type="project" value="UniProtKB-UniRule"/>
</dbReference>
<dbReference type="GO" id="GO:0006094">
    <property type="term" value="P:gluconeogenesis"/>
    <property type="evidence" value="ECO:0007669"/>
    <property type="project" value="UniProtKB-UniRule"/>
</dbReference>
<dbReference type="CDD" id="cd00484">
    <property type="entry name" value="PEPCK_ATP"/>
    <property type="match status" value="1"/>
</dbReference>
<dbReference type="Gene3D" id="3.90.228.20">
    <property type="match status" value="1"/>
</dbReference>
<dbReference type="Gene3D" id="3.40.449.10">
    <property type="entry name" value="Phosphoenolpyruvate Carboxykinase, domain 1"/>
    <property type="match status" value="1"/>
</dbReference>
<dbReference type="Gene3D" id="2.170.8.10">
    <property type="entry name" value="Phosphoenolpyruvate Carboxykinase, domain 2"/>
    <property type="match status" value="1"/>
</dbReference>
<dbReference type="HAMAP" id="MF_00453">
    <property type="entry name" value="PEPCK_ATP"/>
    <property type="match status" value="1"/>
</dbReference>
<dbReference type="InterPro" id="IPR001272">
    <property type="entry name" value="PEP_carboxykinase_ATP"/>
</dbReference>
<dbReference type="InterPro" id="IPR013035">
    <property type="entry name" value="PEP_carboxykinase_C"/>
</dbReference>
<dbReference type="InterPro" id="IPR008210">
    <property type="entry name" value="PEP_carboxykinase_N"/>
</dbReference>
<dbReference type="NCBIfam" id="TIGR00224">
    <property type="entry name" value="pckA"/>
    <property type="match status" value="1"/>
</dbReference>
<dbReference type="NCBIfam" id="NF006820">
    <property type="entry name" value="PRK09344.1-2"/>
    <property type="match status" value="1"/>
</dbReference>
<dbReference type="NCBIfam" id="NF006821">
    <property type="entry name" value="PRK09344.1-3"/>
    <property type="match status" value="1"/>
</dbReference>
<dbReference type="PANTHER" id="PTHR30031:SF0">
    <property type="entry name" value="PHOSPHOENOLPYRUVATE CARBOXYKINASE (ATP)"/>
    <property type="match status" value="1"/>
</dbReference>
<dbReference type="PANTHER" id="PTHR30031">
    <property type="entry name" value="PHOSPHOENOLPYRUVATE CARBOXYKINASE ATP"/>
    <property type="match status" value="1"/>
</dbReference>
<dbReference type="Pfam" id="PF01293">
    <property type="entry name" value="PEPCK_ATP"/>
    <property type="match status" value="1"/>
</dbReference>
<dbReference type="PIRSF" id="PIRSF006294">
    <property type="entry name" value="PEP_crbxkin"/>
    <property type="match status" value="1"/>
</dbReference>
<dbReference type="SUPFAM" id="SSF68923">
    <property type="entry name" value="PEP carboxykinase N-terminal domain"/>
    <property type="match status" value="1"/>
</dbReference>
<dbReference type="SUPFAM" id="SSF53795">
    <property type="entry name" value="PEP carboxykinase-like"/>
    <property type="match status" value="1"/>
</dbReference>
<sequence length="530" mass="58589">MKFNDVTRGTGLEEHGITNANLIYWTPPTSVLYEQIIKRGEGLVSHMGALAVKTGHYTGRAANEKFIVDEPTCHENVAWGKVNKPFDPQKFDELYKRMLAYMDGRNLFVQDCFAGADREHRLPLRIITERAWHSLFARNMFIRATPEELEQHEPRFALINLPGFHAIPSIDGTHSEAFIIVNLGRKLILIGGTSYAGEIKKSIFTILNYILPVEKKILSMHCSANVGPKGDSAVFFGLSGTGKTTLSADSSRALIGDDEHGWDDKGLFNFEGGCYAKIIRLCPESEPEIFATTRRFGTILENVAINTRTRRVDLDDDSFTENTRASYPLTHIPNIVPSGIAGHPANIIMLTCDAYGVLPPISHLTKEQAMYHFLSGYTARVAGTEAGVKEPTATFSTCFGGPFMALNPTVYGELLREKISRHNVSCWLVNTGWNGGPYGVGERIRISYSRALINAALDGTLADGSFETDPFFGLAIPTSCPGVPSEMLNPRNTWSDPARYDDTASRLVAMFRSNFTKYQPYVSAEVANAL</sequence>
<feature type="chain" id="PRO_1000026336" description="Phosphoenolpyruvate carboxykinase (ATP)">
    <location>
        <begin position="1"/>
        <end position="530"/>
    </location>
</feature>
<feature type="binding site" evidence="1">
    <location>
        <position position="60"/>
    </location>
    <ligand>
        <name>substrate</name>
    </ligand>
</feature>
<feature type="binding site" evidence="1">
    <location>
        <position position="195"/>
    </location>
    <ligand>
        <name>substrate</name>
    </ligand>
</feature>
<feature type="binding site" evidence="1">
    <location>
        <position position="201"/>
    </location>
    <ligand>
        <name>ATP</name>
        <dbReference type="ChEBI" id="CHEBI:30616"/>
    </ligand>
</feature>
<feature type="binding site" evidence="1">
    <location>
        <position position="201"/>
    </location>
    <ligand>
        <name>Mn(2+)</name>
        <dbReference type="ChEBI" id="CHEBI:29035"/>
    </ligand>
</feature>
<feature type="binding site" evidence="1">
    <location>
        <position position="201"/>
    </location>
    <ligand>
        <name>substrate</name>
    </ligand>
</feature>
<feature type="binding site" evidence="1">
    <location>
        <position position="221"/>
    </location>
    <ligand>
        <name>ATP</name>
        <dbReference type="ChEBI" id="CHEBI:30616"/>
    </ligand>
</feature>
<feature type="binding site" evidence="1">
    <location>
        <position position="221"/>
    </location>
    <ligand>
        <name>Mn(2+)</name>
        <dbReference type="ChEBI" id="CHEBI:29035"/>
    </ligand>
</feature>
<feature type="binding site" evidence="1">
    <location>
        <begin position="237"/>
        <end position="245"/>
    </location>
    <ligand>
        <name>ATP</name>
        <dbReference type="ChEBI" id="CHEBI:30616"/>
    </ligand>
</feature>
<feature type="binding site" evidence="1">
    <location>
        <position position="258"/>
    </location>
    <ligand>
        <name>Mn(2+)</name>
        <dbReference type="ChEBI" id="CHEBI:29035"/>
    </ligand>
</feature>
<feature type="binding site" evidence="1">
    <location>
        <position position="286"/>
    </location>
    <ligand>
        <name>ATP</name>
        <dbReference type="ChEBI" id="CHEBI:30616"/>
    </ligand>
</feature>
<feature type="binding site" evidence="1">
    <location>
        <position position="324"/>
    </location>
    <ligand>
        <name>ATP</name>
        <dbReference type="ChEBI" id="CHEBI:30616"/>
    </ligand>
</feature>
<feature type="binding site" evidence="1">
    <location>
        <position position="324"/>
    </location>
    <ligand>
        <name>substrate</name>
    </ligand>
</feature>
<feature type="binding site" evidence="1">
    <location>
        <begin position="443"/>
        <end position="444"/>
    </location>
    <ligand>
        <name>ATP</name>
        <dbReference type="ChEBI" id="CHEBI:30616"/>
    </ligand>
</feature>
<feature type="binding site" evidence="1">
    <location>
        <position position="449"/>
    </location>
    <ligand>
        <name>ATP</name>
        <dbReference type="ChEBI" id="CHEBI:30616"/>
    </ligand>
</feature>
<evidence type="ECO:0000255" key="1">
    <source>
        <dbReference type="HAMAP-Rule" id="MF_00453"/>
    </source>
</evidence>
<keyword id="KW-0067">ATP-binding</keyword>
<keyword id="KW-0963">Cytoplasm</keyword>
<keyword id="KW-0210">Decarboxylase</keyword>
<keyword id="KW-0312">Gluconeogenesis</keyword>
<keyword id="KW-0456">Lyase</keyword>
<keyword id="KW-0464">Manganese</keyword>
<keyword id="KW-0479">Metal-binding</keyword>
<keyword id="KW-0547">Nucleotide-binding</keyword>
<keyword id="KW-1185">Reference proteome</keyword>
<name>PCKA_PELPD</name>
<organism>
    <name type="scientific">Pelobacter propionicus (strain DSM 2379 / NBRC 103807 / OttBd1)</name>
    <dbReference type="NCBI Taxonomy" id="338966"/>
    <lineage>
        <taxon>Bacteria</taxon>
        <taxon>Pseudomonadati</taxon>
        <taxon>Thermodesulfobacteriota</taxon>
        <taxon>Desulfuromonadia</taxon>
        <taxon>Desulfuromonadales</taxon>
        <taxon>Desulfuromonadaceae</taxon>
        <taxon>Pelobacter</taxon>
    </lineage>
</organism>
<gene>
    <name evidence="1" type="primary">pckA</name>
    <name type="ordered locus">Ppro_3603</name>
</gene>